<proteinExistence type="inferred from homology"/>
<feature type="chain" id="PRO_0000402086" description="Alpha-tubulin N-acetyltransferase 1">
    <location>
        <begin position="1"/>
        <end position="329"/>
    </location>
</feature>
<feature type="domain" description="N-acetyltransferase" evidence="1">
    <location>
        <begin position="5"/>
        <end position="185"/>
    </location>
</feature>
<feature type="region of interest" description="Disordered" evidence="2">
    <location>
        <begin position="218"/>
        <end position="261"/>
    </location>
</feature>
<feature type="region of interest" description="Disordered" evidence="2">
    <location>
        <begin position="306"/>
        <end position="329"/>
    </location>
</feature>
<feature type="compositionally biased region" description="Polar residues" evidence="2">
    <location>
        <begin position="220"/>
        <end position="229"/>
    </location>
</feature>
<feature type="compositionally biased region" description="Pro residues" evidence="2">
    <location>
        <begin position="238"/>
        <end position="249"/>
    </location>
</feature>
<feature type="compositionally biased region" description="Polar residues" evidence="2">
    <location>
        <begin position="313"/>
        <end position="329"/>
    </location>
</feature>
<feature type="binding site" evidence="1">
    <location>
        <begin position="119"/>
        <end position="132"/>
    </location>
    <ligand>
        <name>acetyl-CoA</name>
        <dbReference type="ChEBI" id="CHEBI:57288"/>
    </ligand>
</feature>
<feature type="binding site" evidence="1">
    <location>
        <begin position="155"/>
        <end position="164"/>
    </location>
    <ligand>
        <name>acetyl-CoA</name>
        <dbReference type="ChEBI" id="CHEBI:57288"/>
    </ligand>
</feature>
<feature type="site" description="Crucial for catalytic activity" evidence="1">
    <location>
        <position position="58"/>
    </location>
</feature>
<dbReference type="EC" id="2.3.1.108" evidence="1"/>
<dbReference type="EMBL" id="AAHK01002446">
    <property type="protein sequence ID" value="EAN82545.1"/>
    <property type="molecule type" value="Genomic_DNA"/>
</dbReference>
<dbReference type="RefSeq" id="XP_804396.1">
    <property type="nucleotide sequence ID" value="XM_799303.1"/>
</dbReference>
<dbReference type="SMR" id="Q4CQJ5"/>
<dbReference type="STRING" id="353153.Q4CQJ5"/>
<dbReference type="PaxDb" id="353153-Q4CQJ5"/>
<dbReference type="EnsemblProtists" id="EAN82545">
    <property type="protein sequence ID" value="EAN82545"/>
    <property type="gene ID" value="Tc00.1047053467287.10"/>
</dbReference>
<dbReference type="GeneID" id="3533827"/>
<dbReference type="KEGG" id="tcr:467287.10"/>
<dbReference type="eggNOG" id="KOG4601">
    <property type="taxonomic scope" value="Eukaryota"/>
</dbReference>
<dbReference type="InParanoid" id="Q4CQJ5"/>
<dbReference type="OMA" id="NFVVFHK"/>
<dbReference type="Proteomes" id="UP000002296">
    <property type="component" value="Unassembled WGS sequence"/>
</dbReference>
<dbReference type="GO" id="GO:0005874">
    <property type="term" value="C:microtubule"/>
    <property type="evidence" value="ECO:0007669"/>
    <property type="project" value="InterPro"/>
</dbReference>
<dbReference type="GO" id="GO:0003700">
    <property type="term" value="F:DNA-binding transcription factor activity"/>
    <property type="evidence" value="ECO:0007669"/>
    <property type="project" value="InterPro"/>
</dbReference>
<dbReference type="GO" id="GO:0043565">
    <property type="term" value="F:sequence-specific DNA binding"/>
    <property type="evidence" value="ECO:0007669"/>
    <property type="project" value="InterPro"/>
</dbReference>
<dbReference type="GO" id="GO:0019799">
    <property type="term" value="F:tubulin N-acetyltransferase activity"/>
    <property type="evidence" value="ECO:0007669"/>
    <property type="project" value="UniProtKB-UniRule"/>
</dbReference>
<dbReference type="GO" id="GO:0070507">
    <property type="term" value="P:regulation of microtubule cytoskeleton organization"/>
    <property type="evidence" value="ECO:0007669"/>
    <property type="project" value="UniProtKB-UniRule"/>
</dbReference>
<dbReference type="FunFam" id="3.40.630.30:FF:000166">
    <property type="entry name" value="Alpha-tubulin N-acetyltransferase"/>
    <property type="match status" value="1"/>
</dbReference>
<dbReference type="Gene3D" id="3.40.630.30">
    <property type="match status" value="1"/>
</dbReference>
<dbReference type="HAMAP" id="MF_03130">
    <property type="entry name" value="mec17"/>
    <property type="match status" value="1"/>
</dbReference>
<dbReference type="InterPro" id="IPR038746">
    <property type="entry name" value="Atat"/>
</dbReference>
<dbReference type="InterPro" id="IPR007965">
    <property type="entry name" value="GNAT_ATAT"/>
</dbReference>
<dbReference type="InterPro" id="IPR003657">
    <property type="entry name" value="WRKY_dom"/>
</dbReference>
<dbReference type="PANTHER" id="PTHR12327">
    <property type="entry name" value="ALPHA-TUBULIN N-ACETYLTRANSFERASE 1"/>
    <property type="match status" value="1"/>
</dbReference>
<dbReference type="PANTHER" id="PTHR12327:SF0">
    <property type="entry name" value="ALPHA-TUBULIN N-ACETYLTRANSFERASE 1"/>
    <property type="match status" value="1"/>
</dbReference>
<dbReference type="Pfam" id="PF05301">
    <property type="entry name" value="Acetyltransf_16"/>
    <property type="match status" value="1"/>
</dbReference>
<dbReference type="PROSITE" id="PS51730">
    <property type="entry name" value="GNAT_ATAT"/>
    <property type="match status" value="1"/>
</dbReference>
<name>ATAT1_TRYCC</name>
<reference key="1">
    <citation type="journal article" date="2005" name="Science">
        <title>The genome sequence of Trypanosoma cruzi, etiologic agent of Chagas disease.</title>
        <authorList>
            <person name="El-Sayed N.M.A."/>
            <person name="Myler P.J."/>
            <person name="Bartholomeu D.C."/>
            <person name="Nilsson D."/>
            <person name="Aggarwal G."/>
            <person name="Tran A.-N."/>
            <person name="Ghedin E."/>
            <person name="Worthey E.A."/>
            <person name="Delcher A.L."/>
            <person name="Blandin G."/>
            <person name="Westenberger S.J."/>
            <person name="Caler E."/>
            <person name="Cerqueira G.C."/>
            <person name="Branche C."/>
            <person name="Haas B."/>
            <person name="Anupama A."/>
            <person name="Arner E."/>
            <person name="Aslund L."/>
            <person name="Attipoe P."/>
            <person name="Bontempi E."/>
            <person name="Bringaud F."/>
            <person name="Burton P."/>
            <person name="Cadag E."/>
            <person name="Campbell D.A."/>
            <person name="Carrington M."/>
            <person name="Crabtree J."/>
            <person name="Darban H."/>
            <person name="da Silveira J.F."/>
            <person name="de Jong P."/>
            <person name="Edwards K."/>
            <person name="Englund P.T."/>
            <person name="Fazelina G."/>
            <person name="Feldblyum T."/>
            <person name="Ferella M."/>
            <person name="Frasch A.C."/>
            <person name="Gull K."/>
            <person name="Horn D."/>
            <person name="Hou L."/>
            <person name="Huang Y."/>
            <person name="Kindlund E."/>
            <person name="Klingbeil M."/>
            <person name="Kluge S."/>
            <person name="Koo H."/>
            <person name="Lacerda D."/>
            <person name="Levin M.J."/>
            <person name="Lorenzi H."/>
            <person name="Louie T."/>
            <person name="Machado C.R."/>
            <person name="McCulloch R."/>
            <person name="McKenna A."/>
            <person name="Mizuno Y."/>
            <person name="Mottram J.C."/>
            <person name="Nelson S."/>
            <person name="Ochaya S."/>
            <person name="Osoegawa K."/>
            <person name="Pai G."/>
            <person name="Parsons M."/>
            <person name="Pentony M."/>
            <person name="Pettersson U."/>
            <person name="Pop M."/>
            <person name="Ramirez J.L."/>
            <person name="Rinta J."/>
            <person name="Robertson L."/>
            <person name="Salzberg S.L."/>
            <person name="Sanchez D.O."/>
            <person name="Seyler A."/>
            <person name="Sharma R."/>
            <person name="Shetty J."/>
            <person name="Simpson A.J."/>
            <person name="Sisk E."/>
            <person name="Tammi M.T."/>
            <person name="Tarleton R."/>
            <person name="Teixeira S."/>
            <person name="Van Aken S."/>
            <person name="Vogt C."/>
            <person name="Ward P.N."/>
            <person name="Wickstead B."/>
            <person name="Wortman J."/>
            <person name="White O."/>
            <person name="Fraser C.M."/>
            <person name="Stuart K.D."/>
            <person name="Andersson B."/>
        </authorList>
    </citation>
    <scope>NUCLEOTIDE SEQUENCE [LARGE SCALE GENOMIC DNA]</scope>
    <source>
        <strain>CL Brener</strain>
    </source>
</reference>
<organism>
    <name type="scientific">Trypanosoma cruzi (strain CL Brener)</name>
    <dbReference type="NCBI Taxonomy" id="353153"/>
    <lineage>
        <taxon>Eukaryota</taxon>
        <taxon>Discoba</taxon>
        <taxon>Euglenozoa</taxon>
        <taxon>Kinetoplastea</taxon>
        <taxon>Metakinetoplastina</taxon>
        <taxon>Trypanosomatida</taxon>
        <taxon>Trypanosomatidae</taxon>
        <taxon>Trypanosoma</taxon>
        <taxon>Schizotrypanum</taxon>
    </lineage>
</organism>
<gene>
    <name type="ORF">Tc00.1047053467287.10</name>
</gene>
<keyword id="KW-0012">Acyltransferase</keyword>
<keyword id="KW-1185">Reference proteome</keyword>
<keyword id="KW-0808">Transferase</keyword>
<protein>
    <recommendedName>
        <fullName evidence="1">Alpha-tubulin N-acetyltransferase 1</fullName>
        <shortName evidence="1">Alpha-TAT 1</shortName>
        <shortName evidence="1">TAT 1</shortName>
        <ecNumber evidence="1">2.3.1.108</ecNumber>
    </recommendedName>
    <alternativeName>
        <fullName evidence="1">Acetyltransferase mec-17 homolog 1</fullName>
    </alternativeName>
</protein>
<accession>Q4CQJ5</accession>
<comment type="function">
    <text evidence="1">Specifically acetylates 'Lys-40' in alpha-tubulin on the lumenal side of microtubules. Promotes microtubule destabilization and accelerates microtubule dynamics; this activity may be independent of acetylation activity. Acetylates alpha-tubulin with a slow enzymatic rate, due to a catalytic site that is not optimized for acetyl transfer. Enters the microtubule through each end and diffuses quickly throughout the lumen of microtubules. Acetylates only long/old microtubules because of its slow acetylation rate since it does not have time to act on dynamically unstable microtubules before the enzyme is released.</text>
</comment>
<comment type="catalytic activity">
    <reaction evidence="1">
        <text>L-lysyl-[alpha-tubulin] + acetyl-CoA = N(6)-acetyl-L-lysyl-[alpha-tubulin] + CoA + H(+)</text>
        <dbReference type="Rhea" id="RHEA:15277"/>
        <dbReference type="Rhea" id="RHEA-COMP:11278"/>
        <dbReference type="Rhea" id="RHEA-COMP:11279"/>
        <dbReference type="ChEBI" id="CHEBI:15378"/>
        <dbReference type="ChEBI" id="CHEBI:29969"/>
        <dbReference type="ChEBI" id="CHEBI:57287"/>
        <dbReference type="ChEBI" id="CHEBI:57288"/>
        <dbReference type="ChEBI" id="CHEBI:61930"/>
        <dbReference type="EC" id="2.3.1.108"/>
    </reaction>
</comment>
<comment type="similarity">
    <text evidence="1">Belongs to the acetyltransferase ATAT1 family.</text>
</comment>
<evidence type="ECO:0000255" key="1">
    <source>
        <dbReference type="HAMAP-Rule" id="MF_03130"/>
    </source>
</evidence>
<evidence type="ECO:0000256" key="2">
    <source>
        <dbReference type="SAM" id="MobiDB-lite"/>
    </source>
</evidence>
<sequence length="329" mass="36884">MSSTSQVALLPKLSLPDGVTVWDGTALEYERRCNNVDEHAVHLMQTINILGIRSKEAQCLNTVLTSVARLRENRQARVYLLCQDGYGVGILKMGVKKLFVTHPSYSSLVEIDPLCVLDFFVDTSFQRKGFGKTLFDAMLLNEGLNPGEVAIDRPSVKFLAFLQKYYGLVEYTPQSNNFVVFHRYFDKWQPQRGKGHWGGNAVPTRSLVRPQNCLRVYPKYQSTTGPNNNFEEDATHRTPPPPPLPPPLVPQGSVTSPGVGKKTAYELQYEEYLREQAYRRRQGGDPRLQPVPNPVSSSEIVAASCGARRRMSPTRSGVQYNIISGTPEH</sequence>